<name>KAD_RUMCH</name>
<protein>
    <recommendedName>
        <fullName evidence="1">Adenylate kinase</fullName>
        <shortName evidence="1">AK</shortName>
        <ecNumber evidence="1">2.7.4.3</ecNumber>
    </recommendedName>
    <alternativeName>
        <fullName evidence="1">ATP-AMP transphosphorylase</fullName>
    </alternativeName>
    <alternativeName>
        <fullName evidence="1">ATP:AMP phosphotransferase</fullName>
    </alternativeName>
    <alternativeName>
        <fullName evidence="1">Adenylate monophosphate kinase</fullName>
    </alternativeName>
</protein>
<comment type="function">
    <text evidence="1">Catalyzes the reversible transfer of the terminal phosphate group between ATP and AMP. Plays an important role in cellular energy homeostasis and in adenine nucleotide metabolism.</text>
</comment>
<comment type="catalytic activity">
    <reaction evidence="1">
        <text>AMP + ATP = 2 ADP</text>
        <dbReference type="Rhea" id="RHEA:12973"/>
        <dbReference type="ChEBI" id="CHEBI:30616"/>
        <dbReference type="ChEBI" id="CHEBI:456215"/>
        <dbReference type="ChEBI" id="CHEBI:456216"/>
        <dbReference type="EC" id="2.7.4.3"/>
    </reaction>
</comment>
<comment type="pathway">
    <text evidence="1">Purine metabolism; AMP biosynthesis via salvage pathway; AMP from ADP: step 1/1.</text>
</comment>
<comment type="subunit">
    <text evidence="1">Monomer.</text>
</comment>
<comment type="subcellular location">
    <subcellularLocation>
        <location evidence="1">Cytoplasm</location>
    </subcellularLocation>
</comment>
<comment type="domain">
    <text evidence="1">Consists of three domains, a large central CORE domain and two small peripheral domains, NMPbind and LID, which undergo movements during catalysis. The LID domain closes over the site of phosphoryl transfer upon ATP binding. Assembling and dissambling the active center during each catalytic cycle provides an effective means to prevent ATP hydrolysis. Some bacteria have evolved a zinc-coordinating structure that stabilizes the LID domain.</text>
</comment>
<comment type="similarity">
    <text evidence="1">Belongs to the adenylate kinase family.</text>
</comment>
<dbReference type="EC" id="2.7.4.3" evidence="1"/>
<dbReference type="EMBL" id="CP001348">
    <property type="protein sequence ID" value="ACL75157.1"/>
    <property type="molecule type" value="Genomic_DNA"/>
</dbReference>
<dbReference type="RefSeq" id="WP_015924321.1">
    <property type="nucleotide sequence ID" value="NC_011898.1"/>
</dbReference>
<dbReference type="SMR" id="B8I800"/>
<dbReference type="STRING" id="394503.Ccel_0779"/>
<dbReference type="KEGG" id="cce:Ccel_0779"/>
<dbReference type="eggNOG" id="COG0563">
    <property type="taxonomic scope" value="Bacteria"/>
</dbReference>
<dbReference type="HOGENOM" id="CLU_032354_1_2_9"/>
<dbReference type="OrthoDB" id="9805030at2"/>
<dbReference type="UniPathway" id="UPA00588">
    <property type="reaction ID" value="UER00649"/>
</dbReference>
<dbReference type="Proteomes" id="UP000001349">
    <property type="component" value="Chromosome"/>
</dbReference>
<dbReference type="GO" id="GO:0005737">
    <property type="term" value="C:cytoplasm"/>
    <property type="evidence" value="ECO:0007669"/>
    <property type="project" value="UniProtKB-SubCell"/>
</dbReference>
<dbReference type="GO" id="GO:0004017">
    <property type="term" value="F:adenylate kinase activity"/>
    <property type="evidence" value="ECO:0007669"/>
    <property type="project" value="UniProtKB-UniRule"/>
</dbReference>
<dbReference type="GO" id="GO:0005524">
    <property type="term" value="F:ATP binding"/>
    <property type="evidence" value="ECO:0007669"/>
    <property type="project" value="UniProtKB-UniRule"/>
</dbReference>
<dbReference type="GO" id="GO:0008270">
    <property type="term" value="F:zinc ion binding"/>
    <property type="evidence" value="ECO:0007669"/>
    <property type="project" value="UniProtKB-UniRule"/>
</dbReference>
<dbReference type="GO" id="GO:0044209">
    <property type="term" value="P:AMP salvage"/>
    <property type="evidence" value="ECO:0007669"/>
    <property type="project" value="UniProtKB-UniRule"/>
</dbReference>
<dbReference type="CDD" id="cd01428">
    <property type="entry name" value="ADK"/>
    <property type="match status" value="1"/>
</dbReference>
<dbReference type="FunFam" id="3.40.50.300:FF:000106">
    <property type="entry name" value="Adenylate kinase mitochondrial"/>
    <property type="match status" value="1"/>
</dbReference>
<dbReference type="Gene3D" id="3.40.50.300">
    <property type="entry name" value="P-loop containing nucleotide triphosphate hydrolases"/>
    <property type="match status" value="1"/>
</dbReference>
<dbReference type="HAMAP" id="MF_00235">
    <property type="entry name" value="Adenylate_kinase_Adk"/>
    <property type="match status" value="1"/>
</dbReference>
<dbReference type="InterPro" id="IPR006259">
    <property type="entry name" value="Adenyl_kin_sub"/>
</dbReference>
<dbReference type="InterPro" id="IPR000850">
    <property type="entry name" value="Adenylat/UMP-CMP_kin"/>
</dbReference>
<dbReference type="InterPro" id="IPR033690">
    <property type="entry name" value="Adenylat_kinase_CS"/>
</dbReference>
<dbReference type="InterPro" id="IPR007862">
    <property type="entry name" value="Adenylate_kinase_lid-dom"/>
</dbReference>
<dbReference type="InterPro" id="IPR027417">
    <property type="entry name" value="P-loop_NTPase"/>
</dbReference>
<dbReference type="NCBIfam" id="TIGR01351">
    <property type="entry name" value="adk"/>
    <property type="match status" value="1"/>
</dbReference>
<dbReference type="NCBIfam" id="NF001380">
    <property type="entry name" value="PRK00279.1-2"/>
    <property type="match status" value="1"/>
</dbReference>
<dbReference type="NCBIfam" id="NF001381">
    <property type="entry name" value="PRK00279.1-3"/>
    <property type="match status" value="1"/>
</dbReference>
<dbReference type="NCBIfam" id="NF011099">
    <property type="entry name" value="PRK14526.1"/>
    <property type="match status" value="1"/>
</dbReference>
<dbReference type="NCBIfam" id="NF011100">
    <property type="entry name" value="PRK14527.1"/>
    <property type="match status" value="1"/>
</dbReference>
<dbReference type="PANTHER" id="PTHR23359">
    <property type="entry name" value="NUCLEOTIDE KINASE"/>
    <property type="match status" value="1"/>
</dbReference>
<dbReference type="Pfam" id="PF00406">
    <property type="entry name" value="ADK"/>
    <property type="match status" value="1"/>
</dbReference>
<dbReference type="Pfam" id="PF05191">
    <property type="entry name" value="ADK_lid"/>
    <property type="match status" value="1"/>
</dbReference>
<dbReference type="PRINTS" id="PR00094">
    <property type="entry name" value="ADENYLTKNASE"/>
</dbReference>
<dbReference type="SUPFAM" id="SSF52540">
    <property type="entry name" value="P-loop containing nucleoside triphosphate hydrolases"/>
    <property type="match status" value="1"/>
</dbReference>
<dbReference type="PROSITE" id="PS00113">
    <property type="entry name" value="ADENYLATE_KINASE"/>
    <property type="match status" value="1"/>
</dbReference>
<proteinExistence type="inferred from homology"/>
<accession>B8I800</accession>
<feature type="chain" id="PRO_1000191133" description="Adenylate kinase">
    <location>
        <begin position="1"/>
        <end position="214"/>
    </location>
</feature>
<feature type="region of interest" description="NMP" evidence="1">
    <location>
        <begin position="30"/>
        <end position="59"/>
    </location>
</feature>
<feature type="region of interest" description="LID" evidence="1">
    <location>
        <begin position="126"/>
        <end position="163"/>
    </location>
</feature>
<feature type="binding site" evidence="1">
    <location>
        <begin position="10"/>
        <end position="15"/>
    </location>
    <ligand>
        <name>ATP</name>
        <dbReference type="ChEBI" id="CHEBI:30616"/>
    </ligand>
</feature>
<feature type="binding site" evidence="1">
    <location>
        <position position="31"/>
    </location>
    <ligand>
        <name>AMP</name>
        <dbReference type="ChEBI" id="CHEBI:456215"/>
    </ligand>
</feature>
<feature type="binding site" evidence="1">
    <location>
        <position position="36"/>
    </location>
    <ligand>
        <name>AMP</name>
        <dbReference type="ChEBI" id="CHEBI:456215"/>
    </ligand>
</feature>
<feature type="binding site" evidence="1">
    <location>
        <begin position="57"/>
        <end position="59"/>
    </location>
    <ligand>
        <name>AMP</name>
        <dbReference type="ChEBI" id="CHEBI:456215"/>
    </ligand>
</feature>
<feature type="binding site" evidence="1">
    <location>
        <begin position="85"/>
        <end position="88"/>
    </location>
    <ligand>
        <name>AMP</name>
        <dbReference type="ChEBI" id="CHEBI:456215"/>
    </ligand>
</feature>
<feature type="binding site" evidence="1">
    <location>
        <position position="92"/>
    </location>
    <ligand>
        <name>AMP</name>
        <dbReference type="ChEBI" id="CHEBI:456215"/>
    </ligand>
</feature>
<feature type="binding site" evidence="1">
    <location>
        <position position="127"/>
    </location>
    <ligand>
        <name>ATP</name>
        <dbReference type="ChEBI" id="CHEBI:30616"/>
    </ligand>
</feature>
<feature type="binding site" evidence="1">
    <location>
        <position position="130"/>
    </location>
    <ligand>
        <name>Zn(2+)</name>
        <dbReference type="ChEBI" id="CHEBI:29105"/>
        <note>structural</note>
    </ligand>
</feature>
<feature type="binding site" evidence="1">
    <location>
        <position position="133"/>
    </location>
    <ligand>
        <name>Zn(2+)</name>
        <dbReference type="ChEBI" id="CHEBI:29105"/>
        <note>structural</note>
    </ligand>
</feature>
<feature type="binding site" evidence="1">
    <location>
        <begin position="136"/>
        <end position="137"/>
    </location>
    <ligand>
        <name>ATP</name>
        <dbReference type="ChEBI" id="CHEBI:30616"/>
    </ligand>
</feature>
<feature type="binding site" evidence="1">
    <location>
        <position position="150"/>
    </location>
    <ligand>
        <name>Zn(2+)</name>
        <dbReference type="ChEBI" id="CHEBI:29105"/>
        <note>structural</note>
    </ligand>
</feature>
<feature type="binding site" evidence="1">
    <location>
        <position position="153"/>
    </location>
    <ligand>
        <name>Zn(2+)</name>
        <dbReference type="ChEBI" id="CHEBI:29105"/>
        <note>structural</note>
    </ligand>
</feature>
<feature type="binding site" evidence="1">
    <location>
        <position position="160"/>
    </location>
    <ligand>
        <name>AMP</name>
        <dbReference type="ChEBI" id="CHEBI:456215"/>
    </ligand>
</feature>
<feature type="binding site" evidence="1">
    <location>
        <position position="171"/>
    </location>
    <ligand>
        <name>AMP</name>
        <dbReference type="ChEBI" id="CHEBI:456215"/>
    </ligand>
</feature>
<feature type="binding site" evidence="1">
    <location>
        <position position="199"/>
    </location>
    <ligand>
        <name>ATP</name>
        <dbReference type="ChEBI" id="CHEBI:30616"/>
    </ligand>
</feature>
<evidence type="ECO:0000255" key="1">
    <source>
        <dbReference type="HAMAP-Rule" id="MF_00235"/>
    </source>
</evidence>
<reference key="1">
    <citation type="submission" date="2009-01" db="EMBL/GenBank/DDBJ databases">
        <title>Complete sequence of Clostridium cellulolyticum H10.</title>
        <authorList>
            <consortium name="US DOE Joint Genome Institute"/>
            <person name="Lucas S."/>
            <person name="Copeland A."/>
            <person name="Lapidus A."/>
            <person name="Glavina del Rio T."/>
            <person name="Dalin E."/>
            <person name="Tice H."/>
            <person name="Bruce D."/>
            <person name="Goodwin L."/>
            <person name="Pitluck S."/>
            <person name="Chertkov O."/>
            <person name="Saunders E."/>
            <person name="Brettin T."/>
            <person name="Detter J.C."/>
            <person name="Han C."/>
            <person name="Larimer F."/>
            <person name="Land M."/>
            <person name="Hauser L."/>
            <person name="Kyrpides N."/>
            <person name="Ivanova N."/>
            <person name="Zhou J."/>
            <person name="Richardson P."/>
        </authorList>
    </citation>
    <scope>NUCLEOTIDE SEQUENCE [LARGE SCALE GENOMIC DNA]</scope>
    <source>
        <strain>ATCC 35319 / DSM 5812 / JCM 6584 / H10</strain>
    </source>
</reference>
<gene>
    <name evidence="1" type="primary">adk</name>
    <name type="ordered locus">Ccel_0779</name>
</gene>
<organism>
    <name type="scientific">Ruminiclostridium cellulolyticum (strain ATCC 35319 / DSM 5812 / JCM 6584 / H10)</name>
    <name type="common">Clostridium cellulolyticum</name>
    <dbReference type="NCBI Taxonomy" id="394503"/>
    <lineage>
        <taxon>Bacteria</taxon>
        <taxon>Bacillati</taxon>
        <taxon>Bacillota</taxon>
        <taxon>Clostridia</taxon>
        <taxon>Eubacteriales</taxon>
        <taxon>Oscillospiraceae</taxon>
        <taxon>Ruminiclostridium</taxon>
    </lineage>
</organism>
<sequence>MRIILLGAPGAGKGTQAKIISEKLNIPHVSTGDIFRANIKGNTPLGQKAKEYMDKGELVPDELTVEIVKDRLGNVDCVNGFILDGFPRTIPQAEYLDKVLVQMNINLDVALLIDVKDEDIIKRMSGRRVCTNCGATYNVVFNPTKVEGICDVCNSPVIQRADDAAETVLNRLETYHKQTQPLINYYEKAGKLKVAEGAGEVDETSKRVMKALGI</sequence>
<keyword id="KW-0067">ATP-binding</keyword>
<keyword id="KW-0963">Cytoplasm</keyword>
<keyword id="KW-0418">Kinase</keyword>
<keyword id="KW-0479">Metal-binding</keyword>
<keyword id="KW-0545">Nucleotide biosynthesis</keyword>
<keyword id="KW-0547">Nucleotide-binding</keyword>
<keyword id="KW-1185">Reference proteome</keyword>
<keyword id="KW-0808">Transferase</keyword>
<keyword id="KW-0862">Zinc</keyword>